<comment type="function">
    <text evidence="1">Photosystem II (PSII) is a light-driven water:plastoquinone oxidoreductase that uses light energy to abstract electrons from H(2)O, generating O(2) and a proton gradient subsequently used for ATP formation. It consists of a core antenna complex that captures photons, and an electron transfer chain that converts photonic excitation into a charge separation. The D1/D2 (PsbA/PsbD) reaction center heterodimer binds P680, the primary electron donor of PSII as well as several subsequent electron acceptors.</text>
</comment>
<comment type="catalytic activity">
    <reaction evidence="1">
        <text>2 a plastoquinone + 4 hnu + 2 H2O = 2 a plastoquinol + O2</text>
        <dbReference type="Rhea" id="RHEA:36359"/>
        <dbReference type="Rhea" id="RHEA-COMP:9561"/>
        <dbReference type="Rhea" id="RHEA-COMP:9562"/>
        <dbReference type="ChEBI" id="CHEBI:15377"/>
        <dbReference type="ChEBI" id="CHEBI:15379"/>
        <dbReference type="ChEBI" id="CHEBI:17757"/>
        <dbReference type="ChEBI" id="CHEBI:30212"/>
        <dbReference type="ChEBI" id="CHEBI:62192"/>
        <dbReference type="EC" id="1.10.3.9"/>
    </reaction>
</comment>
<comment type="cofactor">
    <text evidence="1">The D1/D2 heterodimer binds P680, chlorophylls that are the primary electron donor of PSII, and subsequent electron acceptors. It shares a non-heme iron and each subunit binds pheophytin, quinone, additional chlorophylls, carotenoids and lipids. D1 provides most of the ligands for the Mn4-Ca-O5 cluster of the oxygen-evolving complex (OEC). There is also a Cl(-1) ion associated with D1 and D2, which is required for oxygen evolution. The PSII complex binds additional chlorophylls, carotenoids and specific lipids.</text>
</comment>
<comment type="subunit">
    <text evidence="1">PSII is composed of 1 copy each of membrane proteins PsbA, PsbB, PsbC, PsbD, PsbE, PsbF, PsbH, PsbI, PsbJ, PsbK, PsbL, PsbM, PsbT, PsbX, PsbY, PsbZ, Psb30/Ycf12, peripheral proteins PsbO, CyanoQ (PsbQ), PsbU, PsbV and a large number of cofactors. It forms dimeric complexes.</text>
</comment>
<comment type="subcellular location">
    <subcellularLocation>
        <location evidence="1">Cellular thylakoid membrane</location>
        <topology evidence="1">Multi-pass membrane protein</topology>
    </subcellularLocation>
</comment>
<comment type="PTM">
    <text evidence="1">Tyr-161 forms a radical intermediate that is referred to as redox-active TyrZ, YZ or Y-Z.</text>
</comment>
<comment type="PTM">
    <text evidence="1">C-terminally processed by CtpA; processing is essential to allow assembly of the oxygen-evolving complex and thus photosynthetic growth.</text>
</comment>
<comment type="miscellaneous">
    <text evidence="1">Cyanobacteria usually contain more than 2 copies of the psbA gene.</text>
</comment>
<comment type="miscellaneous">
    <text evidence="1">2 of the reaction center chlorophylls (ChlD1 and ChlD2) are entirely coordinated by water.</text>
</comment>
<comment type="miscellaneous">
    <text evidence="1">Herbicides such as atrazine, BNT, diuron or ioxynil bind in the Q(B) binding site and block subsequent electron transfer.</text>
</comment>
<comment type="similarity">
    <text evidence="1">Belongs to the reaction center PufL/M/PsbA/D family.</text>
</comment>
<gene>
    <name evidence="1 2" type="primary">psbA1</name>
    <name type="synonym">psbA2</name>
    <name type="ordered locus">SYNW0983</name>
</gene>
<gene>
    <name evidence="1 2" type="primary">psbA2</name>
    <name type="synonym">psbA3</name>
    <name type="ordered locus">SYNW2151</name>
</gene>
<dbReference type="EC" id="1.10.3.9" evidence="1"/>
<dbReference type="EMBL" id="BX569691">
    <property type="protein sequence ID" value="CAE07498.1"/>
    <property type="molecule type" value="Genomic_DNA"/>
</dbReference>
<dbReference type="EMBL" id="BX569694">
    <property type="protein sequence ID" value="CAE08666.1"/>
    <property type="molecule type" value="Genomic_DNA"/>
</dbReference>
<dbReference type="RefSeq" id="WP_011127848.1">
    <property type="nucleotide sequence ID" value="NC_005070.1"/>
</dbReference>
<dbReference type="SMR" id="Q7TTJ7"/>
<dbReference type="STRING" id="84588.SYNW0983"/>
<dbReference type="KEGG" id="syw:SYNW0983"/>
<dbReference type="KEGG" id="syw:SYNW2151"/>
<dbReference type="eggNOG" id="ENOG502Z87P">
    <property type="taxonomic scope" value="Bacteria"/>
</dbReference>
<dbReference type="HOGENOM" id="CLU_054206_1_0_3"/>
<dbReference type="Proteomes" id="UP000001422">
    <property type="component" value="Chromosome"/>
</dbReference>
<dbReference type="GO" id="GO:0009523">
    <property type="term" value="C:photosystem II"/>
    <property type="evidence" value="ECO:0007669"/>
    <property type="project" value="UniProtKB-KW"/>
</dbReference>
<dbReference type="GO" id="GO:0031676">
    <property type="term" value="C:plasma membrane-derived thylakoid membrane"/>
    <property type="evidence" value="ECO:0007669"/>
    <property type="project" value="UniProtKB-SubCell"/>
</dbReference>
<dbReference type="GO" id="GO:0016168">
    <property type="term" value="F:chlorophyll binding"/>
    <property type="evidence" value="ECO:0007669"/>
    <property type="project" value="UniProtKB-UniRule"/>
</dbReference>
<dbReference type="GO" id="GO:0045156">
    <property type="term" value="F:electron transporter, transferring electrons within the cyclic electron transport pathway of photosynthesis activity"/>
    <property type="evidence" value="ECO:0007669"/>
    <property type="project" value="InterPro"/>
</dbReference>
<dbReference type="GO" id="GO:0005506">
    <property type="term" value="F:iron ion binding"/>
    <property type="evidence" value="ECO:0007669"/>
    <property type="project" value="UniProtKB-UniRule"/>
</dbReference>
<dbReference type="GO" id="GO:0016682">
    <property type="term" value="F:oxidoreductase activity, acting on diphenols and related substances as donors, oxygen as acceptor"/>
    <property type="evidence" value="ECO:0007669"/>
    <property type="project" value="UniProtKB-UniRule"/>
</dbReference>
<dbReference type="GO" id="GO:0010242">
    <property type="term" value="F:oxygen evolving activity"/>
    <property type="evidence" value="ECO:0007669"/>
    <property type="project" value="UniProtKB-EC"/>
</dbReference>
<dbReference type="GO" id="GO:0009772">
    <property type="term" value="P:photosynthetic electron transport in photosystem II"/>
    <property type="evidence" value="ECO:0007669"/>
    <property type="project" value="InterPro"/>
</dbReference>
<dbReference type="GO" id="GO:0009635">
    <property type="term" value="P:response to herbicide"/>
    <property type="evidence" value="ECO:0007669"/>
    <property type="project" value="UniProtKB-KW"/>
</dbReference>
<dbReference type="FunFam" id="1.20.85.10:FF:000002">
    <property type="entry name" value="Photosystem II protein D1"/>
    <property type="match status" value="1"/>
</dbReference>
<dbReference type="Gene3D" id="1.20.85.10">
    <property type="entry name" value="Photosystem II protein D1-like"/>
    <property type="match status" value="1"/>
</dbReference>
<dbReference type="HAMAP" id="MF_01379">
    <property type="entry name" value="PSII_PsbA_D1"/>
    <property type="match status" value="1"/>
</dbReference>
<dbReference type="InterPro" id="IPR055266">
    <property type="entry name" value="D1/D2"/>
</dbReference>
<dbReference type="InterPro" id="IPR036854">
    <property type="entry name" value="Photo_II_D1/D2_sf"/>
</dbReference>
<dbReference type="InterPro" id="IPR000484">
    <property type="entry name" value="Photo_RC_L/M"/>
</dbReference>
<dbReference type="InterPro" id="IPR055265">
    <property type="entry name" value="Photo_RC_L/M_CS"/>
</dbReference>
<dbReference type="InterPro" id="IPR005867">
    <property type="entry name" value="PSII_D1"/>
</dbReference>
<dbReference type="NCBIfam" id="TIGR01151">
    <property type="entry name" value="psbA"/>
    <property type="match status" value="1"/>
</dbReference>
<dbReference type="PANTHER" id="PTHR33149:SF12">
    <property type="entry name" value="PHOTOSYSTEM II D2 PROTEIN"/>
    <property type="match status" value="1"/>
</dbReference>
<dbReference type="PANTHER" id="PTHR33149">
    <property type="entry name" value="PHOTOSYSTEM II PROTEIN D1"/>
    <property type="match status" value="1"/>
</dbReference>
<dbReference type="Pfam" id="PF00124">
    <property type="entry name" value="Photo_RC"/>
    <property type="match status" value="1"/>
</dbReference>
<dbReference type="PRINTS" id="PR00256">
    <property type="entry name" value="REACTNCENTRE"/>
</dbReference>
<dbReference type="SUPFAM" id="SSF81483">
    <property type="entry name" value="Bacterial photosystem II reaction centre, L and M subunits"/>
    <property type="match status" value="1"/>
</dbReference>
<dbReference type="PROSITE" id="PS00244">
    <property type="entry name" value="REACTION_CENTER"/>
    <property type="match status" value="1"/>
</dbReference>
<evidence type="ECO:0000255" key="1">
    <source>
        <dbReference type="HAMAP-Rule" id="MF_01379"/>
    </source>
</evidence>
<evidence type="ECO:0000305" key="2"/>
<protein>
    <recommendedName>
        <fullName evidence="1">Photosystem II protein D1 1</fullName>
        <shortName evidence="1">PSII D1 protein 1</shortName>
        <ecNumber evidence="1">1.10.3.9</ecNumber>
    </recommendedName>
    <alternativeName>
        <fullName evidence="1">Photosystem II Q(B) protein 1</fullName>
    </alternativeName>
</protein>
<proteinExistence type="inferred from homology"/>
<sequence>MTTTLQQRSGASSWQAFCEWVTSTNNRLYVGWFGVLMIPTLLAATICFVIAFVAAPPVDIDGIREPVAGSLIYGNNIISGAVVPSSNAIGLHFYPIWEAASLDEWLYNGGPFQLVVFHFLIGIYAYMGREWELSYRLGMRPWICVAYSAPVAAASAVFLVYPFGQGSFSDAMPLGISGTFNYMLVFQAEHNILMHPFHMLGVAGVFGGSLFSAMHGSLVTSSLVRETTETESQNYGYKFGQEEETYNIVAAHGYFGRLIFQYASFNNSRSLHFFLAAWPVVGIWFTALGVSTMAFNLNGFNFNQSILDGQGRVLNTWADVLNRAGLGMEVMHERNAHNFPLDLAAAESTPVALQAPAIG</sequence>
<reference key="1">
    <citation type="journal article" date="2003" name="Nature">
        <title>The genome of a motile marine Synechococcus.</title>
        <authorList>
            <person name="Palenik B."/>
            <person name="Brahamsha B."/>
            <person name="Larimer F.W."/>
            <person name="Land M.L."/>
            <person name="Hauser L."/>
            <person name="Chain P."/>
            <person name="Lamerdin J.E."/>
            <person name="Regala W."/>
            <person name="Allen E.E."/>
            <person name="McCarren J."/>
            <person name="Paulsen I.T."/>
            <person name="Dufresne A."/>
            <person name="Partensky F."/>
            <person name="Webb E.A."/>
            <person name="Waterbury J."/>
        </authorList>
    </citation>
    <scope>NUCLEOTIDE SEQUENCE [LARGE SCALE GENOMIC DNA]</scope>
    <source>
        <strain>WH8102</strain>
    </source>
</reference>
<keyword id="KW-0106">Calcium</keyword>
<keyword id="KW-0148">Chlorophyll</keyword>
<keyword id="KW-0157">Chromophore</keyword>
<keyword id="KW-0249">Electron transport</keyword>
<keyword id="KW-0359">Herbicide resistance</keyword>
<keyword id="KW-0408">Iron</keyword>
<keyword id="KW-0460">Magnesium</keyword>
<keyword id="KW-0464">Manganese</keyword>
<keyword id="KW-0472">Membrane</keyword>
<keyword id="KW-0479">Metal-binding</keyword>
<keyword id="KW-0560">Oxidoreductase</keyword>
<keyword id="KW-0602">Photosynthesis</keyword>
<keyword id="KW-0604">Photosystem II</keyword>
<keyword id="KW-0793">Thylakoid</keyword>
<keyword id="KW-0812">Transmembrane</keyword>
<keyword id="KW-1133">Transmembrane helix</keyword>
<keyword id="KW-0813">Transport</keyword>
<accession>Q7TTJ7</accession>
<organism>
    <name type="scientific">Parasynechococcus marenigrum (strain WH8102)</name>
    <dbReference type="NCBI Taxonomy" id="84588"/>
    <lineage>
        <taxon>Bacteria</taxon>
        <taxon>Bacillati</taxon>
        <taxon>Cyanobacteriota</taxon>
        <taxon>Cyanophyceae</taxon>
        <taxon>Synechococcales</taxon>
        <taxon>Prochlorococcaceae</taxon>
        <taxon>Parasynechococcus</taxon>
        <taxon>Parasynechococcus marenigrum</taxon>
    </lineage>
</organism>
<name>PSBA1_PARMW</name>
<feature type="chain" id="PRO_0000316420" description="Photosystem II protein D1 1" evidence="1">
    <location>
        <begin position="1"/>
        <end position="344"/>
    </location>
</feature>
<feature type="propeptide" id="PRO_0000316421" evidence="1">
    <location>
        <begin position="345"/>
        <end position="359"/>
    </location>
</feature>
<feature type="transmembrane region" description="Helical" evidence="1">
    <location>
        <begin position="29"/>
        <end position="46"/>
    </location>
</feature>
<feature type="transmembrane region" description="Helical" evidence="1">
    <location>
        <begin position="118"/>
        <end position="133"/>
    </location>
</feature>
<feature type="transmembrane region" description="Helical" evidence="1">
    <location>
        <begin position="142"/>
        <end position="156"/>
    </location>
</feature>
<feature type="transmembrane region" description="Helical" evidence="1">
    <location>
        <begin position="197"/>
        <end position="218"/>
    </location>
</feature>
<feature type="transmembrane region" description="Helical" evidence="1">
    <location>
        <begin position="274"/>
        <end position="288"/>
    </location>
</feature>
<feature type="binding site" description="axial binding residue" evidence="1">
    <location>
        <position position="118"/>
    </location>
    <ligand>
        <name>chlorophyll a</name>
        <dbReference type="ChEBI" id="CHEBI:58416"/>
        <label>ChlzD1</label>
    </ligand>
    <ligandPart>
        <name>Mg</name>
        <dbReference type="ChEBI" id="CHEBI:25107"/>
    </ligandPart>
</feature>
<feature type="binding site" evidence="1">
    <location>
        <position position="126"/>
    </location>
    <ligand>
        <name>pheophytin a</name>
        <dbReference type="ChEBI" id="CHEBI:136840"/>
        <label>D1</label>
    </ligand>
</feature>
<feature type="binding site" evidence="1">
    <location>
        <position position="170"/>
    </location>
    <ligand>
        <name>[CaMn4O5] cluster</name>
        <dbReference type="ChEBI" id="CHEBI:189552"/>
    </ligand>
</feature>
<feature type="binding site" evidence="1">
    <location>
        <position position="189"/>
    </location>
    <ligand>
        <name>[CaMn4O5] cluster</name>
        <dbReference type="ChEBI" id="CHEBI:189552"/>
    </ligand>
</feature>
<feature type="binding site" description="axial binding residue" evidence="1">
    <location>
        <position position="198"/>
    </location>
    <ligand>
        <name>chlorophyll a</name>
        <dbReference type="ChEBI" id="CHEBI:58416"/>
        <label>PD1</label>
    </ligand>
    <ligandPart>
        <name>Mg</name>
        <dbReference type="ChEBI" id="CHEBI:25107"/>
    </ligandPart>
</feature>
<feature type="binding site" evidence="1">
    <location>
        <position position="215"/>
    </location>
    <ligand>
        <name>a quinone</name>
        <dbReference type="ChEBI" id="CHEBI:132124"/>
        <label>B</label>
    </ligand>
</feature>
<feature type="binding site" evidence="1">
    <location>
        <position position="215"/>
    </location>
    <ligand>
        <name>Fe cation</name>
        <dbReference type="ChEBI" id="CHEBI:24875"/>
        <note>ligand shared with heterodimeric partner</note>
    </ligand>
</feature>
<feature type="binding site" evidence="1">
    <location>
        <begin position="264"/>
        <end position="265"/>
    </location>
    <ligand>
        <name>a quinone</name>
        <dbReference type="ChEBI" id="CHEBI:132124"/>
        <label>B</label>
    </ligand>
</feature>
<feature type="binding site" evidence="1">
    <location>
        <position position="272"/>
    </location>
    <ligand>
        <name>Fe cation</name>
        <dbReference type="ChEBI" id="CHEBI:24875"/>
        <note>ligand shared with heterodimeric partner</note>
    </ligand>
</feature>
<feature type="binding site" evidence="1">
    <location>
        <position position="332"/>
    </location>
    <ligand>
        <name>[CaMn4O5] cluster</name>
        <dbReference type="ChEBI" id="CHEBI:189552"/>
    </ligand>
</feature>
<feature type="binding site" evidence="1">
    <location>
        <position position="333"/>
    </location>
    <ligand>
        <name>[CaMn4O5] cluster</name>
        <dbReference type="ChEBI" id="CHEBI:189552"/>
    </ligand>
</feature>
<feature type="binding site" evidence="1">
    <location>
        <position position="342"/>
    </location>
    <ligand>
        <name>[CaMn4O5] cluster</name>
        <dbReference type="ChEBI" id="CHEBI:189552"/>
    </ligand>
</feature>
<feature type="binding site" evidence="1">
    <location>
        <position position="344"/>
    </location>
    <ligand>
        <name>[CaMn4O5] cluster</name>
        <dbReference type="ChEBI" id="CHEBI:189552"/>
    </ligand>
</feature>
<feature type="site" description="Tyrosine radical intermediate" evidence="1">
    <location>
        <position position="161"/>
    </location>
</feature>
<feature type="site" description="Stabilizes free radical intermediate" evidence="1">
    <location>
        <position position="190"/>
    </location>
</feature>
<feature type="site" description="Cleavage; by CtpA" evidence="1">
    <location>
        <begin position="344"/>
        <end position="345"/>
    </location>
</feature>